<sequence>MPKGPKQQPPEPEWIGDGEGTSPADKVVKKGKKDKKTKKTFFEELAVEDKQAGEEEKLQKEKEQQQQQQQQKKKRDTRKGRRKKDVDDDDDGDERVLMERLKQLSVPASDEEDEVPVPVPRGRKKAKGGNVFEALIQDESEEEKEEEEEKPVLKPAKPEKNRINKAVAEEPPGLRNKKGKEEKSKGKAKNKPSATDSEGEDDEDMTKEKEPPRPGKDKDKKGAEQGSEEEKEEKEGEVKANDPYAHLSKKEKKKLKKQMDYERQVESLKAANAAENDFSVSQAEVSSRQAMLENASDIKLEKFSISAHGKELFVNADLYIVAGRRYGLVGPNGKGKTTLLKHIANRALSIPPNIDVLLCEQEVVADETPAVQAVLRADTKRLRLLEEEKRLQGQLEQGDDTAAEKLEKVYEELRATGAAAAEAKARRILAGLGFDPEMQNRPTQKFSGGWRMRVSLARALFMEPTLLMLDEPTNHLDLNAVIWLNNYLQGWRKTLLIVSHDQGFLDDVCTDIIHLDTQRLHYYRGNYMTFKKMYQQKQKELLKQYEKQEKKLKELKAGGKSTKQAEKQTKEVLTRKQQKCRRKNQDEESQDPPELLKRPREYTVRFTFPDPPPLSPPVLGLHGVTFGYEGQKPLFKNLDFGIDMDSRICIVGPNGVGKSTLLLLLTGKLTPTNGEMRKNHRLKIGFFNQQYAEQLHMEETPTEYLQRGFNLPYQDARKCLGRFGLESHAHTIQICKLSGGQKARVVFAELACREPDVLILDEPTNNLDIESIDALGEAINEYKGAVIVVSHDARLITETNCQLWVVEEQSVSQIDGDFDDYKREVLEALGEVMVNRPRD</sequence>
<proteinExistence type="evidence at protein level"/>
<reference key="1">
    <citation type="journal article" date="2004" name="Genome Res.">
        <title>The genomic sequence and comparative analysis of the rat major histocompatibility complex.</title>
        <authorList>
            <person name="Hurt P."/>
            <person name="Walter L."/>
            <person name="Sudbrak R."/>
            <person name="Klages S."/>
            <person name="Mueller I."/>
            <person name="Shiina T."/>
            <person name="Inoko H."/>
            <person name="Lehrach H."/>
            <person name="Guenther E."/>
            <person name="Reinhardt R."/>
            <person name="Himmelbauer H."/>
        </authorList>
    </citation>
    <scope>NUCLEOTIDE SEQUENCE [LARGE SCALE GENOMIC DNA]</scope>
    <source>
        <strain>Brown Norway</strain>
    </source>
</reference>
<reference key="2">
    <citation type="journal article" date="2000" name="J. Biol. Chem.">
        <title>ABC50 interacts with eukaryotic initiation factor 2 and associates with the ribosome in an ATP-dependent manner.</title>
        <authorList>
            <person name="Tyzack J.K."/>
            <person name="Wang X."/>
            <person name="Belsham G.J."/>
            <person name="Proud C.G."/>
        </authorList>
    </citation>
    <scope>NUCLEOTIDE SEQUENCE [MRNA] OF 26-839</scope>
    <scope>FUNCTION</scope>
    <scope>ASSOCIATION WITH RIBOSOMES</scope>
    <scope>INTERACTION WITH EIF2</scope>
    <source>
        <strain>Wistar</strain>
        <tissue>Skeletal muscle</tissue>
    </source>
</reference>
<reference key="3">
    <citation type="journal article" date="2012" name="Nat. Commun.">
        <title>Quantitative maps of protein phosphorylation sites across 14 different rat organs and tissues.</title>
        <authorList>
            <person name="Lundby A."/>
            <person name="Secher A."/>
            <person name="Lage K."/>
            <person name="Nordsborg N.B."/>
            <person name="Dmytriyev A."/>
            <person name="Lundby C."/>
            <person name="Olsen J.V."/>
        </authorList>
    </citation>
    <scope>PHOSPHORYLATION [LARGE SCALE ANALYSIS] AT SER-109; SER-140; THR-195; SER-197 AND SER-227</scope>
    <scope>IDENTIFICATION BY MASS SPECTROMETRY [LARGE SCALE ANALYSIS]</scope>
</reference>
<organism>
    <name type="scientific">Rattus norvegicus</name>
    <name type="common">Rat</name>
    <dbReference type="NCBI Taxonomy" id="10116"/>
    <lineage>
        <taxon>Eukaryota</taxon>
        <taxon>Metazoa</taxon>
        <taxon>Chordata</taxon>
        <taxon>Craniata</taxon>
        <taxon>Vertebrata</taxon>
        <taxon>Euteleostomi</taxon>
        <taxon>Mammalia</taxon>
        <taxon>Eutheria</taxon>
        <taxon>Euarchontoglires</taxon>
        <taxon>Glires</taxon>
        <taxon>Rodentia</taxon>
        <taxon>Myomorpha</taxon>
        <taxon>Muroidea</taxon>
        <taxon>Muridae</taxon>
        <taxon>Murinae</taxon>
        <taxon>Rattus</taxon>
    </lineage>
</organism>
<protein>
    <recommendedName>
        <fullName>ATP-binding cassette sub-family F member 1</fullName>
    </recommendedName>
    <alternativeName>
        <fullName>ATP-binding cassette 50</fullName>
    </alternativeName>
</protein>
<gene>
    <name type="primary">Abcf1</name>
    <name type="synonym">Abc50</name>
</gene>
<evidence type="ECO:0000250" key="1"/>
<evidence type="ECO:0000250" key="2">
    <source>
        <dbReference type="UniProtKB" id="Q8NE71"/>
    </source>
</evidence>
<evidence type="ECO:0000255" key="3">
    <source>
        <dbReference type="PROSITE-ProRule" id="PRU00434"/>
    </source>
</evidence>
<evidence type="ECO:0000256" key="4">
    <source>
        <dbReference type="SAM" id="MobiDB-lite"/>
    </source>
</evidence>
<evidence type="ECO:0000269" key="5">
    <source>
    </source>
</evidence>
<evidence type="ECO:0000305" key="6"/>
<evidence type="ECO:0007744" key="7">
    <source>
    </source>
</evidence>
<keyword id="KW-0010">Activator</keyword>
<keyword id="KW-0067">ATP-binding</keyword>
<keyword id="KW-0963">Cytoplasm</keyword>
<keyword id="KW-0547">Nucleotide-binding</keyword>
<keyword id="KW-0539">Nucleus</keyword>
<keyword id="KW-0597">Phosphoprotein</keyword>
<keyword id="KW-1185">Reference proteome</keyword>
<keyword id="KW-0677">Repeat</keyword>
<name>ABCF1_RAT</name>
<comment type="function">
    <text evidence="1 5">Required for efficient Cap- and IRES-mediated mRNA translation initiation. Not involved in the ribosome biogenesis (By similarity).</text>
</comment>
<comment type="subunit">
    <text evidence="1">Interacts (via N-terminus) with EIF2S1; the interaction is independent of its phosphorylated status. Associates (via both ABC transporter domains) with the ribosomes (By similarity).</text>
</comment>
<comment type="subcellular location">
    <subcellularLocation>
        <location evidence="2">Cytoplasm</location>
    </subcellularLocation>
    <subcellularLocation>
        <location evidence="2">Nucleus</location>
        <location evidence="2">Nucleoplasm</location>
    </subcellularLocation>
    <subcellularLocation>
        <location evidence="2">Nucleus envelope</location>
    </subcellularLocation>
</comment>
<comment type="PTM">
    <text evidence="1">Phosphorylated at phosphoserine and phosphothreonine. Phosphorylation on Ser-109 and Ser-140 by CK2; inhibits association of EIF2 with ribosomes (By similarity).</text>
</comment>
<feature type="chain" id="PRO_0000093322" description="ATP-binding cassette sub-family F member 1">
    <location>
        <begin position="1"/>
        <end position="839"/>
    </location>
</feature>
<feature type="domain" description="ABC transporter 1" evidence="3">
    <location>
        <begin position="298"/>
        <end position="542"/>
    </location>
</feature>
<feature type="domain" description="ABC transporter 2" evidence="3">
    <location>
        <begin position="619"/>
        <end position="834"/>
    </location>
</feature>
<feature type="region of interest" description="Disordered" evidence="4">
    <location>
        <begin position="1"/>
        <end position="258"/>
    </location>
</feature>
<feature type="region of interest" description="Disordered" evidence="4">
    <location>
        <begin position="553"/>
        <end position="600"/>
    </location>
</feature>
<feature type="compositionally biased region" description="Basic residues" evidence="4">
    <location>
        <begin position="29"/>
        <end position="39"/>
    </location>
</feature>
<feature type="compositionally biased region" description="Basic and acidic residues" evidence="4">
    <location>
        <begin position="47"/>
        <end position="64"/>
    </location>
</feature>
<feature type="compositionally biased region" description="Basic residues" evidence="4">
    <location>
        <begin position="71"/>
        <end position="83"/>
    </location>
</feature>
<feature type="compositionally biased region" description="Acidic residues" evidence="4">
    <location>
        <begin position="136"/>
        <end position="149"/>
    </location>
</feature>
<feature type="compositionally biased region" description="Basic and acidic residues" evidence="4">
    <location>
        <begin position="150"/>
        <end position="162"/>
    </location>
</feature>
<feature type="compositionally biased region" description="Basic and acidic residues" evidence="4">
    <location>
        <begin position="206"/>
        <end position="223"/>
    </location>
</feature>
<feature type="compositionally biased region" description="Basic residues" evidence="4">
    <location>
        <begin position="247"/>
        <end position="256"/>
    </location>
</feature>
<feature type="compositionally biased region" description="Basic and acidic residues" evidence="4">
    <location>
        <begin position="553"/>
        <end position="574"/>
    </location>
</feature>
<feature type="binding site" evidence="3">
    <location>
        <begin position="330"/>
        <end position="337"/>
    </location>
    <ligand>
        <name>ATP</name>
        <dbReference type="ChEBI" id="CHEBI:30616"/>
        <label>1</label>
    </ligand>
</feature>
<feature type="binding site" evidence="3">
    <location>
        <begin position="652"/>
        <end position="659"/>
    </location>
    <ligand>
        <name>ATP</name>
        <dbReference type="ChEBI" id="CHEBI:30616"/>
        <label>2</label>
    </ligand>
</feature>
<feature type="modified residue" description="Phosphoserine" evidence="2">
    <location>
        <position position="22"/>
    </location>
</feature>
<feature type="modified residue" description="Phosphoserine" evidence="2">
    <location>
        <position position="105"/>
    </location>
</feature>
<feature type="modified residue" description="Phosphoserine" evidence="7">
    <location>
        <position position="109"/>
    </location>
</feature>
<feature type="modified residue" description="Phosphoserine" evidence="7">
    <location>
        <position position="140"/>
    </location>
</feature>
<feature type="modified residue" description="Phosphothreonine" evidence="7">
    <location>
        <position position="195"/>
    </location>
</feature>
<feature type="modified residue" description="Phosphoserine" evidence="7">
    <location>
        <position position="197"/>
    </location>
</feature>
<feature type="modified residue" description="Phosphoserine" evidence="7">
    <location>
        <position position="227"/>
    </location>
</feature>
<feature type="modified residue" description="Phosphoserine" evidence="2">
    <location>
        <position position="589"/>
    </location>
</feature>
<feature type="sequence conflict" description="In Ref. 2; AAG23960." evidence="6" ref="2">
    <original>D</original>
    <variation>DK</variation>
    <location>
        <position position="201"/>
    </location>
</feature>
<accession>Q6MG08</accession>
<accession>Q9ERQ2</accession>
<dbReference type="EMBL" id="BX883048">
    <property type="protein sequence ID" value="CAE84039.1"/>
    <property type="molecule type" value="Genomic_DNA"/>
</dbReference>
<dbReference type="EMBL" id="AF293383">
    <property type="protein sequence ID" value="AAG23960.1"/>
    <property type="molecule type" value="mRNA"/>
</dbReference>
<dbReference type="RefSeq" id="NP_001103353.1">
    <property type="nucleotide sequence ID" value="NM_001109883.2"/>
</dbReference>
<dbReference type="SMR" id="Q6MG08"/>
<dbReference type="FunCoup" id="Q6MG08">
    <property type="interactions" value="3630"/>
</dbReference>
<dbReference type="IntAct" id="Q6MG08">
    <property type="interactions" value="3"/>
</dbReference>
<dbReference type="STRING" id="10116.ENSRNOP00000001049"/>
<dbReference type="iPTMnet" id="Q6MG08"/>
<dbReference type="PhosphoSitePlus" id="Q6MG08"/>
<dbReference type="jPOST" id="Q6MG08"/>
<dbReference type="PaxDb" id="10116-ENSRNOP00000001049"/>
<dbReference type="GeneID" id="85493"/>
<dbReference type="KEGG" id="rno:85493"/>
<dbReference type="UCSC" id="RGD:620286">
    <property type="organism name" value="rat"/>
</dbReference>
<dbReference type="AGR" id="RGD:620286"/>
<dbReference type="CTD" id="23"/>
<dbReference type="RGD" id="620286">
    <property type="gene designation" value="Abcf1"/>
</dbReference>
<dbReference type="VEuPathDB" id="HostDB:ENSRNOG00000000799"/>
<dbReference type="eggNOG" id="KOG0066">
    <property type="taxonomic scope" value="Eukaryota"/>
</dbReference>
<dbReference type="HOGENOM" id="CLU_000604_36_5_1"/>
<dbReference type="InParanoid" id="Q6MG08"/>
<dbReference type="OrthoDB" id="88183at9989"/>
<dbReference type="PhylomeDB" id="Q6MG08"/>
<dbReference type="Reactome" id="R-RNO-382556">
    <property type="pathway name" value="ABC-family proteins mediated transport"/>
</dbReference>
<dbReference type="PRO" id="PR:Q6MG08"/>
<dbReference type="Proteomes" id="UP000002494">
    <property type="component" value="Chromosome 20"/>
</dbReference>
<dbReference type="Bgee" id="ENSRNOG00000000799">
    <property type="expression patterns" value="Expressed in pancreas and 20 other cell types or tissues"/>
</dbReference>
<dbReference type="GO" id="GO:0005737">
    <property type="term" value="C:cytoplasm"/>
    <property type="evidence" value="ECO:0007669"/>
    <property type="project" value="UniProtKB-SubCell"/>
</dbReference>
<dbReference type="GO" id="GO:0005635">
    <property type="term" value="C:nuclear envelope"/>
    <property type="evidence" value="ECO:0000250"/>
    <property type="project" value="UniProtKB"/>
</dbReference>
<dbReference type="GO" id="GO:0005654">
    <property type="term" value="C:nucleoplasm"/>
    <property type="evidence" value="ECO:0000250"/>
    <property type="project" value="UniProtKB"/>
</dbReference>
<dbReference type="GO" id="GO:0005840">
    <property type="term" value="C:ribosome"/>
    <property type="evidence" value="ECO:0000314"/>
    <property type="project" value="RGD"/>
</dbReference>
<dbReference type="GO" id="GO:0005524">
    <property type="term" value="F:ATP binding"/>
    <property type="evidence" value="ECO:0000250"/>
    <property type="project" value="UniProtKB"/>
</dbReference>
<dbReference type="GO" id="GO:0016887">
    <property type="term" value="F:ATP hydrolysis activity"/>
    <property type="evidence" value="ECO:0007669"/>
    <property type="project" value="InterPro"/>
</dbReference>
<dbReference type="GO" id="GO:0043022">
    <property type="term" value="F:ribosome binding"/>
    <property type="evidence" value="ECO:0000250"/>
    <property type="project" value="UniProtKB"/>
</dbReference>
<dbReference type="GO" id="GO:0008494">
    <property type="term" value="F:translation activator activity"/>
    <property type="evidence" value="ECO:0000250"/>
    <property type="project" value="UniProtKB"/>
</dbReference>
<dbReference type="GO" id="GO:0045727">
    <property type="term" value="P:positive regulation of translation"/>
    <property type="evidence" value="ECO:0000250"/>
    <property type="project" value="UniProtKB"/>
</dbReference>
<dbReference type="GO" id="GO:0006412">
    <property type="term" value="P:translation"/>
    <property type="evidence" value="ECO:0000303"/>
    <property type="project" value="RGD"/>
</dbReference>
<dbReference type="GO" id="GO:0006413">
    <property type="term" value="P:translational initiation"/>
    <property type="evidence" value="ECO:0000250"/>
    <property type="project" value="UniProtKB"/>
</dbReference>
<dbReference type="CDD" id="cd03221">
    <property type="entry name" value="ABCF_EF-3"/>
    <property type="match status" value="2"/>
</dbReference>
<dbReference type="FunFam" id="3.40.50.300:FF:000471">
    <property type="entry name" value="ATP-binding cassette, sub-family F (GCN20), member 1"/>
    <property type="match status" value="1"/>
</dbReference>
<dbReference type="FunFam" id="3.40.50.300:FF:000472">
    <property type="entry name" value="ATP-binding cassette, sub-family F (GCN20), member 1"/>
    <property type="match status" value="1"/>
</dbReference>
<dbReference type="Gene3D" id="3.40.50.300">
    <property type="entry name" value="P-loop containing nucleotide triphosphate hydrolases"/>
    <property type="match status" value="2"/>
</dbReference>
<dbReference type="InterPro" id="IPR003593">
    <property type="entry name" value="AAA+_ATPase"/>
</dbReference>
<dbReference type="InterPro" id="IPR003439">
    <property type="entry name" value="ABC_transporter-like_ATP-bd"/>
</dbReference>
<dbReference type="InterPro" id="IPR017871">
    <property type="entry name" value="ABC_transporter-like_CS"/>
</dbReference>
<dbReference type="InterPro" id="IPR050611">
    <property type="entry name" value="ABCF_EF3_subfamily"/>
</dbReference>
<dbReference type="InterPro" id="IPR027417">
    <property type="entry name" value="P-loop_NTPase"/>
</dbReference>
<dbReference type="PANTHER" id="PTHR19211:SF14">
    <property type="entry name" value="ATP-BINDING CASSETTE SUB-FAMILY F MEMBER 1"/>
    <property type="match status" value="1"/>
</dbReference>
<dbReference type="PANTHER" id="PTHR19211">
    <property type="entry name" value="ATP-BINDING TRANSPORT PROTEIN-RELATED"/>
    <property type="match status" value="1"/>
</dbReference>
<dbReference type="Pfam" id="PF00005">
    <property type="entry name" value="ABC_tran"/>
    <property type="match status" value="2"/>
</dbReference>
<dbReference type="SMART" id="SM00382">
    <property type="entry name" value="AAA"/>
    <property type="match status" value="2"/>
</dbReference>
<dbReference type="SUPFAM" id="SSF52540">
    <property type="entry name" value="P-loop containing nucleoside triphosphate hydrolases"/>
    <property type="match status" value="2"/>
</dbReference>
<dbReference type="PROSITE" id="PS00211">
    <property type="entry name" value="ABC_TRANSPORTER_1"/>
    <property type="match status" value="2"/>
</dbReference>
<dbReference type="PROSITE" id="PS50893">
    <property type="entry name" value="ABC_TRANSPORTER_2"/>
    <property type="match status" value="2"/>
</dbReference>